<evidence type="ECO:0000255" key="1">
    <source>
        <dbReference type="HAMAP-Rule" id="MF_00045"/>
    </source>
</evidence>
<comment type="function">
    <text evidence="1">3'-to-5' exoribonuclease specific for small oligoribonucleotides.</text>
</comment>
<comment type="subcellular location">
    <subcellularLocation>
        <location evidence="1">Cytoplasm</location>
    </subcellularLocation>
</comment>
<comment type="similarity">
    <text evidence="1">Belongs to the oligoribonuclease family.</text>
</comment>
<organism>
    <name type="scientific">Cutibacterium acnes (strain DSM 16379 / KPA171202)</name>
    <name type="common">Propionibacterium acnes</name>
    <dbReference type="NCBI Taxonomy" id="267747"/>
    <lineage>
        <taxon>Bacteria</taxon>
        <taxon>Bacillati</taxon>
        <taxon>Actinomycetota</taxon>
        <taxon>Actinomycetes</taxon>
        <taxon>Propionibacteriales</taxon>
        <taxon>Propionibacteriaceae</taxon>
        <taxon>Cutibacterium</taxon>
    </lineage>
</organism>
<protein>
    <recommendedName>
        <fullName evidence="1">Oligoribonuclease</fullName>
        <ecNumber evidence="1">3.1.15.-</ecNumber>
    </recommendedName>
</protein>
<keyword id="KW-0963">Cytoplasm</keyword>
<keyword id="KW-0269">Exonuclease</keyword>
<keyword id="KW-0378">Hydrolase</keyword>
<keyword id="KW-0540">Nuclease</keyword>
<accession>Q6A786</accession>
<gene>
    <name evidence="1" type="primary">orn</name>
    <name type="ordered locus">PPA1642</name>
</gene>
<sequence length="202" mass="22615">MLVWIDCEMTGLDLAHDGLIEVAALVTDGQLNVQGEGVDVIIKPEPQWLDHMNDFVRNMHTTSGLLAELDKGLTMAQAQDQVLDYIRTYVPQAGKAPLAGNTIGTDRSFLAKDMPKLESYVHYRNVDVSSIKELARRWYPRAFGHSPEKQGNHRALADIQESIEELMYWREVLMVPSPGPETTRCDEIAAKYQGFLTGAGRD</sequence>
<feature type="chain" id="PRO_0000111060" description="Oligoribonuclease">
    <location>
        <begin position="1"/>
        <end position="202"/>
    </location>
</feature>
<feature type="domain" description="Exonuclease" evidence="1">
    <location>
        <begin position="2"/>
        <end position="166"/>
    </location>
</feature>
<feature type="active site" evidence="1">
    <location>
        <position position="123"/>
    </location>
</feature>
<proteinExistence type="inferred from homology"/>
<name>ORN_CUTAK</name>
<dbReference type="EC" id="3.1.15.-" evidence="1"/>
<dbReference type="EMBL" id="AE017283">
    <property type="protein sequence ID" value="AAT83379.1"/>
    <property type="molecule type" value="Genomic_DNA"/>
</dbReference>
<dbReference type="RefSeq" id="WP_002523167.1">
    <property type="nucleotide sequence ID" value="NZ_CP025935.1"/>
</dbReference>
<dbReference type="SMR" id="Q6A786"/>
<dbReference type="EnsemblBacteria" id="AAT83379">
    <property type="protein sequence ID" value="AAT83379"/>
    <property type="gene ID" value="PPA1642"/>
</dbReference>
<dbReference type="GeneID" id="92857588"/>
<dbReference type="KEGG" id="pac:PPA1642"/>
<dbReference type="eggNOG" id="COG1949">
    <property type="taxonomic scope" value="Bacteria"/>
</dbReference>
<dbReference type="HOGENOM" id="CLU_064761_3_0_11"/>
<dbReference type="Proteomes" id="UP000000603">
    <property type="component" value="Chromosome"/>
</dbReference>
<dbReference type="GO" id="GO:0005737">
    <property type="term" value="C:cytoplasm"/>
    <property type="evidence" value="ECO:0007669"/>
    <property type="project" value="UniProtKB-SubCell"/>
</dbReference>
<dbReference type="GO" id="GO:0000175">
    <property type="term" value="F:3'-5'-RNA exonuclease activity"/>
    <property type="evidence" value="ECO:0007669"/>
    <property type="project" value="InterPro"/>
</dbReference>
<dbReference type="GO" id="GO:0003676">
    <property type="term" value="F:nucleic acid binding"/>
    <property type="evidence" value="ECO:0007669"/>
    <property type="project" value="InterPro"/>
</dbReference>
<dbReference type="CDD" id="cd06135">
    <property type="entry name" value="Orn"/>
    <property type="match status" value="1"/>
</dbReference>
<dbReference type="FunFam" id="3.30.420.10:FF:000003">
    <property type="entry name" value="Oligoribonuclease"/>
    <property type="match status" value="1"/>
</dbReference>
<dbReference type="Gene3D" id="3.30.420.10">
    <property type="entry name" value="Ribonuclease H-like superfamily/Ribonuclease H"/>
    <property type="match status" value="1"/>
</dbReference>
<dbReference type="HAMAP" id="MF_00045">
    <property type="entry name" value="Oligoribonuclease"/>
    <property type="match status" value="1"/>
</dbReference>
<dbReference type="InterPro" id="IPR013520">
    <property type="entry name" value="Exonuclease_RNaseT/DNA_pol3"/>
</dbReference>
<dbReference type="InterPro" id="IPR022894">
    <property type="entry name" value="Oligoribonuclease"/>
</dbReference>
<dbReference type="InterPro" id="IPR012337">
    <property type="entry name" value="RNaseH-like_sf"/>
</dbReference>
<dbReference type="InterPro" id="IPR036397">
    <property type="entry name" value="RNaseH_sf"/>
</dbReference>
<dbReference type="NCBIfam" id="NF003765">
    <property type="entry name" value="PRK05359.1"/>
    <property type="match status" value="1"/>
</dbReference>
<dbReference type="PANTHER" id="PTHR11046">
    <property type="entry name" value="OLIGORIBONUCLEASE, MITOCHONDRIAL"/>
    <property type="match status" value="1"/>
</dbReference>
<dbReference type="PANTHER" id="PTHR11046:SF0">
    <property type="entry name" value="OLIGORIBONUCLEASE, MITOCHONDRIAL"/>
    <property type="match status" value="1"/>
</dbReference>
<dbReference type="Pfam" id="PF00929">
    <property type="entry name" value="RNase_T"/>
    <property type="match status" value="1"/>
</dbReference>
<dbReference type="SMART" id="SM00479">
    <property type="entry name" value="EXOIII"/>
    <property type="match status" value="1"/>
</dbReference>
<dbReference type="SUPFAM" id="SSF53098">
    <property type="entry name" value="Ribonuclease H-like"/>
    <property type="match status" value="1"/>
</dbReference>
<reference key="1">
    <citation type="journal article" date="2004" name="Science">
        <title>The complete genome sequence of Propionibacterium acnes, a commensal of human skin.</title>
        <authorList>
            <person name="Brueggemann H."/>
            <person name="Henne A."/>
            <person name="Hoster F."/>
            <person name="Liesegang H."/>
            <person name="Wiezer A."/>
            <person name="Strittmatter A."/>
            <person name="Hujer S."/>
            <person name="Duerre P."/>
            <person name="Gottschalk G."/>
        </authorList>
    </citation>
    <scope>NUCLEOTIDE SEQUENCE [LARGE SCALE GENOMIC DNA]</scope>
    <source>
        <strain>DSM 16379 / KPA171202</strain>
    </source>
</reference>